<reference key="1">
    <citation type="journal article" date="1999" name="Nature">
        <title>Sequence and analysis of chromosome 4 of the plant Arabidopsis thaliana.</title>
        <authorList>
            <person name="Mayer K.F.X."/>
            <person name="Schueller C."/>
            <person name="Wambutt R."/>
            <person name="Murphy G."/>
            <person name="Volckaert G."/>
            <person name="Pohl T."/>
            <person name="Duesterhoeft A."/>
            <person name="Stiekema W."/>
            <person name="Entian K.-D."/>
            <person name="Terryn N."/>
            <person name="Harris B."/>
            <person name="Ansorge W."/>
            <person name="Brandt P."/>
            <person name="Grivell L.A."/>
            <person name="Rieger M."/>
            <person name="Weichselgartner M."/>
            <person name="de Simone V."/>
            <person name="Obermaier B."/>
            <person name="Mache R."/>
            <person name="Mueller M."/>
            <person name="Kreis M."/>
            <person name="Delseny M."/>
            <person name="Puigdomenech P."/>
            <person name="Watson M."/>
            <person name="Schmidtheini T."/>
            <person name="Reichert B."/>
            <person name="Portetelle D."/>
            <person name="Perez-Alonso M."/>
            <person name="Boutry M."/>
            <person name="Bancroft I."/>
            <person name="Vos P."/>
            <person name="Hoheisel J."/>
            <person name="Zimmermann W."/>
            <person name="Wedler H."/>
            <person name="Ridley P."/>
            <person name="Langham S.-A."/>
            <person name="McCullagh B."/>
            <person name="Bilham L."/>
            <person name="Robben J."/>
            <person name="van der Schueren J."/>
            <person name="Grymonprez B."/>
            <person name="Chuang Y.-J."/>
            <person name="Vandenbussche F."/>
            <person name="Braeken M."/>
            <person name="Weltjens I."/>
            <person name="Voet M."/>
            <person name="Bastiaens I."/>
            <person name="Aert R."/>
            <person name="Defoor E."/>
            <person name="Weitzenegger T."/>
            <person name="Bothe G."/>
            <person name="Ramsperger U."/>
            <person name="Hilbert H."/>
            <person name="Braun M."/>
            <person name="Holzer E."/>
            <person name="Brandt A."/>
            <person name="Peters S."/>
            <person name="van Staveren M."/>
            <person name="Dirkse W."/>
            <person name="Mooijman P."/>
            <person name="Klein Lankhorst R."/>
            <person name="Rose M."/>
            <person name="Hauf J."/>
            <person name="Koetter P."/>
            <person name="Berneiser S."/>
            <person name="Hempel S."/>
            <person name="Feldpausch M."/>
            <person name="Lamberth S."/>
            <person name="Van den Daele H."/>
            <person name="De Keyser A."/>
            <person name="Buysshaert C."/>
            <person name="Gielen J."/>
            <person name="Villarroel R."/>
            <person name="De Clercq R."/>
            <person name="van Montagu M."/>
            <person name="Rogers J."/>
            <person name="Cronin A."/>
            <person name="Quail M.A."/>
            <person name="Bray-Allen S."/>
            <person name="Clark L."/>
            <person name="Doggett J."/>
            <person name="Hall S."/>
            <person name="Kay M."/>
            <person name="Lennard N."/>
            <person name="McLay K."/>
            <person name="Mayes R."/>
            <person name="Pettett A."/>
            <person name="Rajandream M.A."/>
            <person name="Lyne M."/>
            <person name="Benes V."/>
            <person name="Rechmann S."/>
            <person name="Borkova D."/>
            <person name="Bloecker H."/>
            <person name="Scharfe M."/>
            <person name="Grimm M."/>
            <person name="Loehnert T.-H."/>
            <person name="Dose S."/>
            <person name="de Haan M."/>
            <person name="Maarse A.C."/>
            <person name="Schaefer M."/>
            <person name="Mueller-Auer S."/>
            <person name="Gabel C."/>
            <person name="Fuchs M."/>
            <person name="Fartmann B."/>
            <person name="Granderath K."/>
            <person name="Dauner D."/>
            <person name="Herzl A."/>
            <person name="Neumann S."/>
            <person name="Argiriou A."/>
            <person name="Vitale D."/>
            <person name="Liguori R."/>
            <person name="Piravandi E."/>
            <person name="Massenet O."/>
            <person name="Quigley F."/>
            <person name="Clabauld G."/>
            <person name="Muendlein A."/>
            <person name="Felber R."/>
            <person name="Schnabl S."/>
            <person name="Hiller R."/>
            <person name="Schmidt W."/>
            <person name="Lecharny A."/>
            <person name="Aubourg S."/>
            <person name="Chefdor F."/>
            <person name="Cooke R."/>
            <person name="Berger C."/>
            <person name="Monfort A."/>
            <person name="Casacuberta E."/>
            <person name="Gibbons T."/>
            <person name="Weber N."/>
            <person name="Vandenbol M."/>
            <person name="Bargues M."/>
            <person name="Terol J."/>
            <person name="Torres A."/>
            <person name="Perez-Perez A."/>
            <person name="Purnelle B."/>
            <person name="Bent E."/>
            <person name="Johnson S."/>
            <person name="Tacon D."/>
            <person name="Jesse T."/>
            <person name="Heijnen L."/>
            <person name="Schwarz S."/>
            <person name="Scholler P."/>
            <person name="Heber S."/>
            <person name="Francs P."/>
            <person name="Bielke C."/>
            <person name="Frishman D."/>
            <person name="Haase D."/>
            <person name="Lemcke K."/>
            <person name="Mewes H.-W."/>
            <person name="Stocker S."/>
            <person name="Zaccaria P."/>
            <person name="Bevan M."/>
            <person name="Wilson R.K."/>
            <person name="de la Bastide M."/>
            <person name="Habermann K."/>
            <person name="Parnell L."/>
            <person name="Dedhia N."/>
            <person name="Gnoj L."/>
            <person name="Schutz K."/>
            <person name="Huang E."/>
            <person name="Spiegel L."/>
            <person name="Sekhon M."/>
            <person name="Murray J."/>
            <person name="Sheet P."/>
            <person name="Cordes M."/>
            <person name="Abu-Threideh J."/>
            <person name="Stoneking T."/>
            <person name="Kalicki J."/>
            <person name="Graves T."/>
            <person name="Harmon G."/>
            <person name="Edwards J."/>
            <person name="Latreille P."/>
            <person name="Courtney L."/>
            <person name="Cloud J."/>
            <person name="Abbott A."/>
            <person name="Scott K."/>
            <person name="Johnson D."/>
            <person name="Minx P."/>
            <person name="Bentley D."/>
            <person name="Fulton B."/>
            <person name="Miller N."/>
            <person name="Greco T."/>
            <person name="Kemp K."/>
            <person name="Kramer J."/>
            <person name="Fulton L."/>
            <person name="Mardis E."/>
            <person name="Dante M."/>
            <person name="Pepin K."/>
            <person name="Hillier L.W."/>
            <person name="Nelson J."/>
            <person name="Spieth J."/>
            <person name="Ryan E."/>
            <person name="Andrews S."/>
            <person name="Geisel C."/>
            <person name="Layman D."/>
            <person name="Du H."/>
            <person name="Ali J."/>
            <person name="Berghoff A."/>
            <person name="Jones K."/>
            <person name="Drone K."/>
            <person name="Cotton M."/>
            <person name="Joshu C."/>
            <person name="Antonoiu B."/>
            <person name="Zidanic M."/>
            <person name="Strong C."/>
            <person name="Sun H."/>
            <person name="Lamar B."/>
            <person name="Yordan C."/>
            <person name="Ma P."/>
            <person name="Zhong J."/>
            <person name="Preston R."/>
            <person name="Vil D."/>
            <person name="Shekher M."/>
            <person name="Matero A."/>
            <person name="Shah R."/>
            <person name="Swaby I.K."/>
            <person name="O'Shaughnessy A."/>
            <person name="Rodriguez M."/>
            <person name="Hoffman J."/>
            <person name="Till S."/>
            <person name="Granat S."/>
            <person name="Shohdy N."/>
            <person name="Hasegawa A."/>
            <person name="Hameed A."/>
            <person name="Lodhi M."/>
            <person name="Johnson A."/>
            <person name="Chen E."/>
            <person name="Marra M.A."/>
            <person name="Martienssen R."/>
            <person name="McCombie W.R."/>
        </authorList>
    </citation>
    <scope>NUCLEOTIDE SEQUENCE [LARGE SCALE GENOMIC DNA]</scope>
    <source>
        <strain>cv. Columbia</strain>
    </source>
</reference>
<reference key="2">
    <citation type="journal article" date="2017" name="Plant J.">
        <title>Araport11: a complete reannotation of the Arabidopsis thaliana reference genome.</title>
        <authorList>
            <person name="Cheng C.Y."/>
            <person name="Krishnakumar V."/>
            <person name="Chan A.P."/>
            <person name="Thibaud-Nissen F."/>
            <person name="Schobel S."/>
            <person name="Town C.D."/>
        </authorList>
    </citation>
    <scope>GENOME REANNOTATION</scope>
    <source>
        <strain>cv. Columbia</strain>
    </source>
</reference>
<reference key="3">
    <citation type="submission" date="2004-06" db="EMBL/GenBank/DDBJ databases">
        <title>Arabidopsis ORF clones.</title>
        <authorList>
            <person name="Cheuk R.F."/>
            <person name="Chen H."/>
            <person name="Kim C.J."/>
            <person name="Shinn P."/>
            <person name="Ecker J.R."/>
        </authorList>
    </citation>
    <scope>NUCLEOTIDE SEQUENCE [LARGE SCALE MRNA]</scope>
    <source>
        <strain>cv. Columbia</strain>
    </source>
</reference>
<reference key="4">
    <citation type="journal article" date="2018" name="New Phytol.">
        <title>Members of the DEAL subfamily of the DUF1218 gene family are required for bilateral symmetry but not for dorsoventrality in Arabidopsis leaves.</title>
        <authorList>
            <person name="Wilson-Sanchez D."/>
            <person name="Martinez-Lopez S."/>
            <person name="Navarro-Cartagena S."/>
            <person name="Jover-Gil S."/>
            <person name="Micol J.L."/>
        </authorList>
    </citation>
    <scope>FUNCTION</scope>
    <scope>DISRUPTION PHENOTYPE</scope>
    <scope>TISSUE SPECIFICITY</scope>
    <scope>GENE FAMILY</scope>
    <scope>NOMENCLATURE</scope>
    <source>
        <strain>cv. Columbia</strain>
    </source>
</reference>
<sequence length="168" mass="18141">MARNVGFFICILILAMDVSAGILGIEAEIAQNKVKHLKMWIFECRDPSYTAFKYGLAACILLVLAHVTANFLGGCLCVASRQDLEKSSANKQLAVASLIFTWIILAIAFSMLIVGTMANSRSRKNCGISHHRVLSIGGILCFVHGLFAVAYYISATASTREQTSAGHA</sequence>
<evidence type="ECO:0000250" key="1">
    <source>
        <dbReference type="UniProtKB" id="Q9ZV57"/>
    </source>
</evidence>
<evidence type="ECO:0000255" key="2"/>
<evidence type="ECO:0000269" key="3">
    <source>
    </source>
</evidence>
<evidence type="ECO:0000303" key="4">
    <source>
    </source>
</evidence>
<evidence type="ECO:0000305" key="5"/>
<evidence type="ECO:0000312" key="6">
    <source>
        <dbReference type="EMBL" id="AEE84438.1"/>
    </source>
</evidence>
<evidence type="ECO:0000312" key="7">
    <source>
        <dbReference type="EMBL" id="CAA20196.1"/>
    </source>
</evidence>
<dbReference type="EMBL" id="AL031187">
    <property type="protein sequence ID" value="CAA20196.1"/>
    <property type="molecule type" value="Genomic_DNA"/>
</dbReference>
<dbReference type="EMBL" id="AL161554">
    <property type="protein sequence ID" value="CAB79130.1"/>
    <property type="molecule type" value="Genomic_DNA"/>
</dbReference>
<dbReference type="EMBL" id="CP002687">
    <property type="protein sequence ID" value="AEE84438.1"/>
    <property type="molecule type" value="Genomic_DNA"/>
</dbReference>
<dbReference type="EMBL" id="BT014771">
    <property type="protein sequence ID" value="AAT41754.1"/>
    <property type="molecule type" value="mRNA"/>
</dbReference>
<dbReference type="EMBL" id="BT015009">
    <property type="protein sequence ID" value="AAT70460.1"/>
    <property type="molecule type" value="mRNA"/>
</dbReference>
<dbReference type="PIR" id="T05173">
    <property type="entry name" value="T05173"/>
</dbReference>
<dbReference type="RefSeq" id="NP_193862.1">
    <property type="nucleotide sequence ID" value="NM_118249.8"/>
</dbReference>
<dbReference type="SMR" id="O81898"/>
<dbReference type="FunCoup" id="O81898">
    <property type="interactions" value="168"/>
</dbReference>
<dbReference type="STRING" id="3702.O81898"/>
<dbReference type="MetOSite" id="O81898"/>
<dbReference type="PaxDb" id="3702-AT4G21310.1"/>
<dbReference type="EnsemblPlants" id="AT4G21310.1">
    <property type="protein sequence ID" value="AT4G21310.1"/>
    <property type="gene ID" value="AT4G21310"/>
</dbReference>
<dbReference type="GeneID" id="827879"/>
<dbReference type="Gramene" id="AT4G21310.1">
    <property type="protein sequence ID" value="AT4G21310.1"/>
    <property type="gene ID" value="AT4G21310"/>
</dbReference>
<dbReference type="KEGG" id="ath:AT4G21310"/>
<dbReference type="Araport" id="AT4G21310"/>
<dbReference type="TAIR" id="AT4G21310">
    <property type="gene designation" value="DEAL2"/>
</dbReference>
<dbReference type="eggNOG" id="ENOG502RXRV">
    <property type="taxonomic scope" value="Eukaryota"/>
</dbReference>
<dbReference type="HOGENOM" id="CLU_103513_0_0_1"/>
<dbReference type="InParanoid" id="O81898"/>
<dbReference type="OMA" id="NVGFFIC"/>
<dbReference type="OrthoDB" id="1667348at2759"/>
<dbReference type="PhylomeDB" id="O81898"/>
<dbReference type="PRO" id="PR:O81898"/>
<dbReference type="Proteomes" id="UP000006548">
    <property type="component" value="Chromosome 4"/>
</dbReference>
<dbReference type="ExpressionAtlas" id="O81898">
    <property type="expression patterns" value="baseline and differential"/>
</dbReference>
<dbReference type="GO" id="GO:0005789">
    <property type="term" value="C:endoplasmic reticulum membrane"/>
    <property type="evidence" value="ECO:0007669"/>
    <property type="project" value="UniProtKB-SubCell"/>
</dbReference>
<dbReference type="GO" id="GO:0009855">
    <property type="term" value="P:determination of bilateral symmetry"/>
    <property type="evidence" value="ECO:0000315"/>
    <property type="project" value="UniProtKB"/>
</dbReference>
<dbReference type="GO" id="GO:0048366">
    <property type="term" value="P:leaf development"/>
    <property type="evidence" value="ECO:0000315"/>
    <property type="project" value="UniProtKB"/>
</dbReference>
<dbReference type="InterPro" id="IPR009606">
    <property type="entry name" value="DEAL/Modifying_wall_lignin1/2"/>
</dbReference>
<dbReference type="InterPro" id="IPR052222">
    <property type="entry name" value="DESIGUAL"/>
</dbReference>
<dbReference type="PANTHER" id="PTHR31769">
    <property type="entry name" value="OS07G0462200 PROTEIN-RELATED"/>
    <property type="match status" value="1"/>
</dbReference>
<dbReference type="Pfam" id="PF06749">
    <property type="entry name" value="DUF1218"/>
    <property type="match status" value="1"/>
</dbReference>
<proteinExistence type="evidence at transcript level"/>
<name>DEAL2_ARATH</name>
<accession>O81898</accession>
<protein>
    <recommendedName>
        <fullName evidence="4">Protein DESIGUAL 2</fullName>
    </recommendedName>
</protein>
<keyword id="KW-0217">Developmental protein</keyword>
<keyword id="KW-0256">Endoplasmic reticulum</keyword>
<keyword id="KW-0472">Membrane</keyword>
<keyword id="KW-1185">Reference proteome</keyword>
<keyword id="KW-0732">Signal</keyword>
<keyword id="KW-0812">Transmembrane</keyword>
<keyword id="KW-1133">Transmembrane helix</keyword>
<gene>
    <name evidence="4" type="primary">DEAL2</name>
    <name evidence="6" type="ordered locus">At4g21310</name>
    <name evidence="7" type="ORF">T6K22.40</name>
</gene>
<comment type="function">
    <text evidence="3">Involved, partially redundantly with VCC/DEAL1 and DEAL3, to ensure bilateral symmetry development and early leaf margin patterning, probably via the regulation of auxin and CUC2 distribution.</text>
</comment>
<comment type="subcellular location">
    <subcellularLocation>
        <location evidence="1">Endoplasmic reticulum membrane</location>
        <topology evidence="2">Multi-pass membrane protein</topology>
    </subcellularLocation>
</comment>
<comment type="tissue specificity">
    <text evidence="3">Mainly expressed in roots, inflorescences and developing leaves, and, at low levels, in mature leaves.</text>
</comment>
<comment type="disruption phenotype">
    <text evidence="3">Developmental defects of pistils, some being bent or coiled or twisted, and some showing unfused carpels with exposed ovules (PubMed:29139551). The vcc-3 deal2-1 double mutant shows leaf asymmetry (PubMed:29139551). The vcc-3 deal2-1 deal3-1 triple mutant shows a strong leaf asymmetry (PubMed:29139551).</text>
</comment>
<comment type="similarity">
    <text evidence="5">Belongs to the DESIGUAL family.</text>
</comment>
<feature type="signal peptide" evidence="2">
    <location>
        <begin position="1"/>
        <end position="20"/>
    </location>
</feature>
<feature type="chain" id="PRO_5014306629" description="Protein DESIGUAL 2">
    <location>
        <begin position="21"/>
        <end position="168"/>
    </location>
</feature>
<feature type="transmembrane region" description="Helical" evidence="2">
    <location>
        <begin position="56"/>
        <end position="76"/>
    </location>
</feature>
<feature type="transmembrane region" description="Helical" evidence="2">
    <location>
        <begin position="94"/>
        <end position="114"/>
    </location>
</feature>
<feature type="transmembrane region" description="Helical" evidence="2">
    <location>
        <begin position="133"/>
        <end position="153"/>
    </location>
</feature>
<organism>
    <name type="scientific">Arabidopsis thaliana</name>
    <name type="common">Mouse-ear cress</name>
    <dbReference type="NCBI Taxonomy" id="3702"/>
    <lineage>
        <taxon>Eukaryota</taxon>
        <taxon>Viridiplantae</taxon>
        <taxon>Streptophyta</taxon>
        <taxon>Embryophyta</taxon>
        <taxon>Tracheophyta</taxon>
        <taxon>Spermatophyta</taxon>
        <taxon>Magnoliopsida</taxon>
        <taxon>eudicotyledons</taxon>
        <taxon>Gunneridae</taxon>
        <taxon>Pentapetalae</taxon>
        <taxon>rosids</taxon>
        <taxon>malvids</taxon>
        <taxon>Brassicales</taxon>
        <taxon>Brassicaceae</taxon>
        <taxon>Camelineae</taxon>
        <taxon>Arabidopsis</taxon>
    </lineage>
</organism>